<comment type="function">
    <text evidence="1">mRNA decapping enzyme that specifically removes the nicotinamide adenine dinucleotide (NAD) cap from a subset of mRNAs by hydrolyzing the diphosphate linkage to produce nicotinamide mononucleotide (NMN) and 5' monophosphate mRNA. The NAD-cap is present at the 5'-end of some mRNAs and stabilizes RNA against 5'-processing. Has preference for mRNAs with a 5'-end purine. Catalyzes the hydrolysis of a broad range of dinucleotide pyrophosphates.</text>
</comment>
<comment type="catalytic activity">
    <reaction evidence="1">
        <text>a 5'-end NAD(+)-phospho-ribonucleoside in mRNA + H2O = a 5'-end phospho-adenosine-phospho-ribonucleoside in mRNA + beta-nicotinamide D-ribonucleotide + 2 H(+)</text>
        <dbReference type="Rhea" id="RHEA:60876"/>
        <dbReference type="Rhea" id="RHEA-COMP:15698"/>
        <dbReference type="Rhea" id="RHEA-COMP:15719"/>
        <dbReference type="ChEBI" id="CHEBI:14649"/>
        <dbReference type="ChEBI" id="CHEBI:15377"/>
        <dbReference type="ChEBI" id="CHEBI:15378"/>
        <dbReference type="ChEBI" id="CHEBI:144029"/>
        <dbReference type="ChEBI" id="CHEBI:144051"/>
    </reaction>
    <physiologicalReaction direction="left-to-right" evidence="1">
        <dbReference type="Rhea" id="RHEA:60877"/>
    </physiologicalReaction>
</comment>
<comment type="catalytic activity">
    <reaction evidence="1">
        <text>NAD(+) + H2O = beta-nicotinamide D-ribonucleotide + AMP + 2 H(+)</text>
        <dbReference type="Rhea" id="RHEA:11800"/>
        <dbReference type="ChEBI" id="CHEBI:14649"/>
        <dbReference type="ChEBI" id="CHEBI:15377"/>
        <dbReference type="ChEBI" id="CHEBI:15378"/>
        <dbReference type="ChEBI" id="CHEBI:57540"/>
        <dbReference type="ChEBI" id="CHEBI:456215"/>
        <dbReference type="EC" id="3.6.1.22"/>
    </reaction>
</comment>
<comment type="catalytic activity">
    <reaction evidence="1">
        <text>NADH + H2O = reduced beta-nicotinamide D-ribonucleotide + AMP + 2 H(+)</text>
        <dbReference type="Rhea" id="RHEA:48868"/>
        <dbReference type="ChEBI" id="CHEBI:15377"/>
        <dbReference type="ChEBI" id="CHEBI:15378"/>
        <dbReference type="ChEBI" id="CHEBI:57945"/>
        <dbReference type="ChEBI" id="CHEBI:90832"/>
        <dbReference type="ChEBI" id="CHEBI:456215"/>
        <dbReference type="EC" id="3.6.1.22"/>
    </reaction>
</comment>
<comment type="cofactor">
    <cofactor evidence="1">
        <name>Mg(2+)</name>
        <dbReference type="ChEBI" id="CHEBI:18420"/>
    </cofactor>
    <cofactor evidence="1">
        <name>Mn(2+)</name>
        <dbReference type="ChEBI" id="CHEBI:29035"/>
    </cofactor>
    <text evidence="1">Divalent metal cations. Mg(2+) or Mn(2+).</text>
</comment>
<comment type="cofactor">
    <cofactor evidence="1">
        <name>Zn(2+)</name>
        <dbReference type="ChEBI" id="CHEBI:29105"/>
    </cofactor>
    <text evidence="1">Binds 1 zinc ion per subunit.</text>
</comment>
<comment type="subunit">
    <text evidence="1">Homodimer.</text>
</comment>
<comment type="similarity">
    <text evidence="1">Belongs to the Nudix hydrolase family. NudC subfamily.</text>
</comment>
<gene>
    <name evidence="1" type="primary">nudC</name>
    <name type="ordered locus">SSON_4169</name>
</gene>
<organism>
    <name type="scientific">Shigella sonnei (strain Ss046)</name>
    <dbReference type="NCBI Taxonomy" id="300269"/>
    <lineage>
        <taxon>Bacteria</taxon>
        <taxon>Pseudomonadati</taxon>
        <taxon>Pseudomonadota</taxon>
        <taxon>Gammaproteobacteria</taxon>
        <taxon>Enterobacterales</taxon>
        <taxon>Enterobacteriaceae</taxon>
        <taxon>Shigella</taxon>
    </lineage>
</organism>
<sequence>MDRIIEKLDHGWWVVSHEQKLWLPKGELPYGEAANFDLVGQRALQIGEWQGEPVWLVQQQRRHDMGSVRQVIDLDVGLFQLAGRGVQLAEFYRSHKYCGYCGHEMYPSKTEWAMLCSHCRERYYPQIAPCIIVAIRRDDSILLAQHTRHRNGVHTVLAGFVEVGETLEQAVAREVMEESGIKVKNLRYVTSQPWPFPQSLMTAFMAEYDSGDIVIDPKELLEANWYRYDDLPLLPPPGTVARRLIEDTVAMCRAEYE</sequence>
<accession>Q3YUY8</accession>
<evidence type="ECO:0000255" key="1">
    <source>
        <dbReference type="HAMAP-Rule" id="MF_00297"/>
    </source>
</evidence>
<protein>
    <recommendedName>
        <fullName evidence="1">NAD-capped RNA hydrolase NudC</fullName>
        <shortName evidence="1">DeNADding enzyme NudC</shortName>
        <ecNumber evidence="1">3.6.1.-</ecNumber>
    </recommendedName>
    <alternativeName>
        <fullName evidence="1">NADH pyrophosphatase</fullName>
        <ecNumber evidence="1">3.6.1.22</ecNumber>
    </alternativeName>
</protein>
<proteinExistence type="inferred from homology"/>
<keyword id="KW-0378">Hydrolase</keyword>
<keyword id="KW-0460">Magnesium</keyword>
<keyword id="KW-0464">Manganese</keyword>
<keyword id="KW-0479">Metal-binding</keyword>
<keyword id="KW-0520">NAD</keyword>
<keyword id="KW-1185">Reference proteome</keyword>
<keyword id="KW-0862">Zinc</keyword>
<dbReference type="EC" id="3.6.1.-" evidence="1"/>
<dbReference type="EC" id="3.6.1.22" evidence="1"/>
<dbReference type="EMBL" id="CP000038">
    <property type="protein sequence ID" value="AAZ90674.1"/>
    <property type="molecule type" value="Genomic_DNA"/>
</dbReference>
<dbReference type="RefSeq" id="WP_000373940.1">
    <property type="nucleotide sequence ID" value="NC_007384.1"/>
</dbReference>
<dbReference type="SMR" id="Q3YUY8"/>
<dbReference type="GeneID" id="93777898"/>
<dbReference type="KEGG" id="ssn:SSON_4169"/>
<dbReference type="HOGENOM" id="CLU_037162_0_1_6"/>
<dbReference type="Proteomes" id="UP000002529">
    <property type="component" value="Chromosome"/>
</dbReference>
<dbReference type="GO" id="GO:0005829">
    <property type="term" value="C:cytosol"/>
    <property type="evidence" value="ECO:0007669"/>
    <property type="project" value="TreeGrafter"/>
</dbReference>
<dbReference type="GO" id="GO:0000287">
    <property type="term" value="F:magnesium ion binding"/>
    <property type="evidence" value="ECO:0007669"/>
    <property type="project" value="UniProtKB-UniRule"/>
</dbReference>
<dbReference type="GO" id="GO:0030145">
    <property type="term" value="F:manganese ion binding"/>
    <property type="evidence" value="ECO:0007669"/>
    <property type="project" value="UniProtKB-UniRule"/>
</dbReference>
<dbReference type="GO" id="GO:0000210">
    <property type="term" value="F:NAD+ diphosphatase activity"/>
    <property type="evidence" value="ECO:0007669"/>
    <property type="project" value="UniProtKB-UniRule"/>
</dbReference>
<dbReference type="GO" id="GO:0035529">
    <property type="term" value="F:NADH pyrophosphatase activity"/>
    <property type="evidence" value="ECO:0007669"/>
    <property type="project" value="TreeGrafter"/>
</dbReference>
<dbReference type="GO" id="GO:0110153">
    <property type="term" value="F:RNA NAD-cap (NMN-forming) hydrolase activity"/>
    <property type="evidence" value="ECO:0007669"/>
    <property type="project" value="RHEA"/>
</dbReference>
<dbReference type="GO" id="GO:0008270">
    <property type="term" value="F:zinc ion binding"/>
    <property type="evidence" value="ECO:0007669"/>
    <property type="project" value="UniProtKB-UniRule"/>
</dbReference>
<dbReference type="GO" id="GO:0019677">
    <property type="term" value="P:NAD catabolic process"/>
    <property type="evidence" value="ECO:0007669"/>
    <property type="project" value="TreeGrafter"/>
</dbReference>
<dbReference type="GO" id="GO:0006734">
    <property type="term" value="P:NADH metabolic process"/>
    <property type="evidence" value="ECO:0007669"/>
    <property type="project" value="TreeGrafter"/>
</dbReference>
<dbReference type="GO" id="GO:0006742">
    <property type="term" value="P:NADP catabolic process"/>
    <property type="evidence" value="ECO:0007669"/>
    <property type="project" value="TreeGrafter"/>
</dbReference>
<dbReference type="CDD" id="cd03429">
    <property type="entry name" value="NUDIX_NADH_pyrophosphatase_Nudt13"/>
    <property type="match status" value="1"/>
</dbReference>
<dbReference type="FunFam" id="3.90.79.10:FF:000004">
    <property type="entry name" value="NADH pyrophosphatase"/>
    <property type="match status" value="1"/>
</dbReference>
<dbReference type="FunFam" id="3.90.79.20:FF:000001">
    <property type="entry name" value="NADH pyrophosphatase"/>
    <property type="match status" value="1"/>
</dbReference>
<dbReference type="Gene3D" id="3.90.79.20">
    <property type="match status" value="1"/>
</dbReference>
<dbReference type="Gene3D" id="3.90.79.10">
    <property type="entry name" value="Nucleoside Triphosphate Pyrophosphohydrolase"/>
    <property type="match status" value="1"/>
</dbReference>
<dbReference type="HAMAP" id="MF_00297">
    <property type="entry name" value="Nudix_NudC"/>
    <property type="match status" value="1"/>
</dbReference>
<dbReference type="InterPro" id="IPR050241">
    <property type="entry name" value="NAD-cap_RNA_hydrolase_NudC"/>
</dbReference>
<dbReference type="InterPro" id="IPR049734">
    <property type="entry name" value="NudC-like_C"/>
</dbReference>
<dbReference type="InterPro" id="IPR015797">
    <property type="entry name" value="NUDIX_hydrolase-like_dom_sf"/>
</dbReference>
<dbReference type="InterPro" id="IPR020084">
    <property type="entry name" value="NUDIX_hydrolase_CS"/>
</dbReference>
<dbReference type="InterPro" id="IPR000086">
    <property type="entry name" value="NUDIX_hydrolase_dom"/>
</dbReference>
<dbReference type="InterPro" id="IPR022925">
    <property type="entry name" value="RNA_Hydrolase_NudC"/>
</dbReference>
<dbReference type="InterPro" id="IPR015376">
    <property type="entry name" value="Znr_NADH_PPase"/>
</dbReference>
<dbReference type="NCBIfam" id="NF001299">
    <property type="entry name" value="PRK00241.1"/>
    <property type="match status" value="1"/>
</dbReference>
<dbReference type="PANTHER" id="PTHR42904:SF6">
    <property type="entry name" value="NAD-CAPPED RNA HYDROLASE NUDT12"/>
    <property type="match status" value="1"/>
</dbReference>
<dbReference type="PANTHER" id="PTHR42904">
    <property type="entry name" value="NUDIX HYDROLASE, NUDC SUBFAMILY"/>
    <property type="match status" value="1"/>
</dbReference>
<dbReference type="Pfam" id="PF00293">
    <property type="entry name" value="NUDIX"/>
    <property type="match status" value="1"/>
</dbReference>
<dbReference type="Pfam" id="PF09297">
    <property type="entry name" value="Zn_ribbon_NUD"/>
    <property type="match status" value="1"/>
</dbReference>
<dbReference type="SUPFAM" id="SSF55811">
    <property type="entry name" value="Nudix"/>
    <property type="match status" value="2"/>
</dbReference>
<dbReference type="PROSITE" id="PS51462">
    <property type="entry name" value="NUDIX"/>
    <property type="match status" value="1"/>
</dbReference>
<dbReference type="PROSITE" id="PS00893">
    <property type="entry name" value="NUDIX_BOX"/>
    <property type="match status" value="1"/>
</dbReference>
<name>NUDC_SHISS</name>
<feature type="chain" id="PRO_0000232124" description="NAD-capped RNA hydrolase NudC">
    <location>
        <begin position="1"/>
        <end position="257"/>
    </location>
</feature>
<feature type="domain" description="Nudix hydrolase" evidence="1">
    <location>
        <begin position="125"/>
        <end position="248"/>
    </location>
</feature>
<feature type="short sequence motif" description="Nudix box" evidence="1">
    <location>
        <begin position="159"/>
        <end position="180"/>
    </location>
</feature>
<feature type="binding site" evidence="1">
    <location>
        <position position="25"/>
    </location>
    <ligand>
        <name>substrate</name>
    </ligand>
</feature>
<feature type="binding site" evidence="1">
    <location>
        <position position="69"/>
    </location>
    <ligand>
        <name>substrate</name>
    </ligand>
</feature>
<feature type="binding site" evidence="1">
    <location>
        <position position="98"/>
    </location>
    <ligand>
        <name>Zn(2+)</name>
        <dbReference type="ChEBI" id="CHEBI:29105"/>
    </ligand>
</feature>
<feature type="binding site" evidence="1">
    <location>
        <position position="101"/>
    </location>
    <ligand>
        <name>Zn(2+)</name>
        <dbReference type="ChEBI" id="CHEBI:29105"/>
    </ligand>
</feature>
<feature type="binding site" evidence="1">
    <location>
        <position position="111"/>
    </location>
    <ligand>
        <name>substrate</name>
    </ligand>
</feature>
<feature type="binding site" evidence="1">
    <location>
        <position position="116"/>
    </location>
    <ligand>
        <name>Zn(2+)</name>
        <dbReference type="ChEBI" id="CHEBI:29105"/>
    </ligand>
</feature>
<feature type="binding site" evidence="1">
    <location>
        <position position="119"/>
    </location>
    <ligand>
        <name>Zn(2+)</name>
        <dbReference type="ChEBI" id="CHEBI:29105"/>
    </ligand>
</feature>
<feature type="binding site" evidence="1">
    <location>
        <position position="124"/>
    </location>
    <ligand>
        <name>substrate</name>
    </ligand>
</feature>
<feature type="binding site" evidence="1">
    <location>
        <position position="158"/>
    </location>
    <ligand>
        <name>a divalent metal cation</name>
        <dbReference type="ChEBI" id="CHEBI:60240"/>
        <label>1</label>
    </ligand>
</feature>
<feature type="binding site" evidence="1">
    <location>
        <position position="174"/>
    </location>
    <ligand>
        <name>a divalent metal cation</name>
        <dbReference type="ChEBI" id="CHEBI:60240"/>
        <label>2</label>
    </ligand>
</feature>
<feature type="binding site" evidence="1">
    <location>
        <position position="174"/>
    </location>
    <ligand>
        <name>a divalent metal cation</name>
        <dbReference type="ChEBI" id="CHEBI:60240"/>
        <label>3</label>
    </ligand>
</feature>
<feature type="binding site" evidence="1">
    <location>
        <position position="178"/>
    </location>
    <ligand>
        <name>a divalent metal cation</name>
        <dbReference type="ChEBI" id="CHEBI:60240"/>
        <label>1</label>
    </ligand>
</feature>
<feature type="binding site" evidence="1">
    <location>
        <position position="178"/>
    </location>
    <ligand>
        <name>a divalent metal cation</name>
        <dbReference type="ChEBI" id="CHEBI:60240"/>
        <label>3</label>
    </ligand>
</feature>
<feature type="binding site" evidence="1">
    <location>
        <begin position="192"/>
        <end position="199"/>
    </location>
    <ligand>
        <name>substrate</name>
    </ligand>
</feature>
<feature type="binding site" evidence="1">
    <location>
        <position position="219"/>
    </location>
    <ligand>
        <name>a divalent metal cation</name>
        <dbReference type="ChEBI" id="CHEBI:60240"/>
        <label>1</label>
    </ligand>
</feature>
<feature type="binding site" evidence="1">
    <location>
        <position position="219"/>
    </location>
    <ligand>
        <name>a divalent metal cation</name>
        <dbReference type="ChEBI" id="CHEBI:60240"/>
        <label>3</label>
    </ligand>
</feature>
<feature type="binding site" evidence="1">
    <location>
        <position position="241"/>
    </location>
    <ligand>
        <name>substrate</name>
    </ligand>
</feature>
<reference key="1">
    <citation type="journal article" date="2005" name="Nucleic Acids Res.">
        <title>Genome dynamics and diversity of Shigella species, the etiologic agents of bacillary dysentery.</title>
        <authorList>
            <person name="Yang F."/>
            <person name="Yang J."/>
            <person name="Zhang X."/>
            <person name="Chen L."/>
            <person name="Jiang Y."/>
            <person name="Yan Y."/>
            <person name="Tang X."/>
            <person name="Wang J."/>
            <person name="Xiong Z."/>
            <person name="Dong J."/>
            <person name="Xue Y."/>
            <person name="Zhu Y."/>
            <person name="Xu X."/>
            <person name="Sun L."/>
            <person name="Chen S."/>
            <person name="Nie H."/>
            <person name="Peng J."/>
            <person name="Xu J."/>
            <person name="Wang Y."/>
            <person name="Yuan Z."/>
            <person name="Wen Y."/>
            <person name="Yao Z."/>
            <person name="Shen Y."/>
            <person name="Qiang B."/>
            <person name="Hou Y."/>
            <person name="Yu J."/>
            <person name="Jin Q."/>
        </authorList>
    </citation>
    <scope>NUCLEOTIDE SEQUENCE [LARGE SCALE GENOMIC DNA]</scope>
    <source>
        <strain>Ss046</strain>
    </source>
</reference>